<gene>
    <name type="primary">norM</name>
    <name type="ordered locus">LMOf2365_1874</name>
</gene>
<evidence type="ECO:0000250" key="1"/>
<evidence type="ECO:0000255" key="2"/>
<evidence type="ECO:0000305" key="3"/>
<sequence length="456" mass="49589">MQQTVTYGAKWKQFLTIFTPIVITQLTLFSMTFFDTTMSGNYSNQALAGVAIGSSFWAPVNAAFSGLLMAITPIIAQLIGAKKEKQVKNTVHNGLYIALFLAFILILINFLVVPTILTHMPVTAEVAGIARHFLNGICIGIPAFFISAILRSFIDSLGLTRVTMLITLCTVPFNIFLNYCFIFGNFGFPEMGGAGSGYATGITYWLVVLVSVILIQTQTRLRKFGIFKGLTALRFSKIKEIIGIGVPNGLTILFETSIFSAVTILMGAFGTETIAAHQSANSVCTLLYAFPLSVASTLTILGGYETGAKRLKDAKQYRHIGMAAAIFIGCVNGAILFFFRDIIAGFYTNDPALSNLIMHFLVYAILFQFADAVLSPVLGALRGYKDVTVTSIVAFISYWLIGLPVGYGLSFTNLGPFGYWIGLSTGLFVAAFILSIRVRKTEQKLSFNTKDAEISS</sequence>
<name>NORM_LISMF</name>
<organism>
    <name type="scientific">Listeria monocytogenes serotype 4b (strain F2365)</name>
    <dbReference type="NCBI Taxonomy" id="265669"/>
    <lineage>
        <taxon>Bacteria</taxon>
        <taxon>Bacillati</taxon>
        <taxon>Bacillota</taxon>
        <taxon>Bacilli</taxon>
        <taxon>Bacillales</taxon>
        <taxon>Listeriaceae</taxon>
        <taxon>Listeria</taxon>
    </lineage>
</organism>
<keyword id="KW-0050">Antiport</keyword>
<keyword id="KW-1003">Cell membrane</keyword>
<keyword id="KW-0406">Ion transport</keyword>
<keyword id="KW-0472">Membrane</keyword>
<keyword id="KW-0812">Transmembrane</keyword>
<keyword id="KW-1133">Transmembrane helix</keyword>
<keyword id="KW-0813">Transport</keyword>
<comment type="function">
    <text evidence="1">Multidrug efflux pump.</text>
</comment>
<comment type="subcellular location">
    <subcellularLocation>
        <location evidence="1">Cell membrane</location>
        <topology evidence="1">Multi-pass membrane protein</topology>
    </subcellularLocation>
</comment>
<comment type="similarity">
    <text evidence="3">Belongs to the multi antimicrobial extrusion (MATE) (TC 2.A.66.1) family.</text>
</comment>
<dbReference type="EMBL" id="AE017262">
    <property type="protein sequence ID" value="AAT04644.1"/>
    <property type="molecule type" value="Genomic_DNA"/>
</dbReference>
<dbReference type="RefSeq" id="WP_009929777.1">
    <property type="nucleotide sequence ID" value="NC_002973.6"/>
</dbReference>
<dbReference type="SMR" id="Q71YH0"/>
<dbReference type="KEGG" id="lmf:LMOf2365_1874"/>
<dbReference type="HOGENOM" id="CLU_012893_6_0_9"/>
<dbReference type="GO" id="GO:0005886">
    <property type="term" value="C:plasma membrane"/>
    <property type="evidence" value="ECO:0007669"/>
    <property type="project" value="UniProtKB-SubCell"/>
</dbReference>
<dbReference type="GO" id="GO:0015297">
    <property type="term" value="F:antiporter activity"/>
    <property type="evidence" value="ECO:0007669"/>
    <property type="project" value="UniProtKB-KW"/>
</dbReference>
<dbReference type="GO" id="GO:0042910">
    <property type="term" value="F:xenobiotic transmembrane transporter activity"/>
    <property type="evidence" value="ECO:0007669"/>
    <property type="project" value="InterPro"/>
</dbReference>
<dbReference type="GO" id="GO:0006811">
    <property type="term" value="P:monoatomic ion transport"/>
    <property type="evidence" value="ECO:0007669"/>
    <property type="project" value="UniProtKB-KW"/>
</dbReference>
<dbReference type="CDD" id="cd13131">
    <property type="entry name" value="MATE_NorM_like"/>
    <property type="match status" value="1"/>
</dbReference>
<dbReference type="InterPro" id="IPR002528">
    <property type="entry name" value="MATE_fam"/>
</dbReference>
<dbReference type="InterPro" id="IPR050222">
    <property type="entry name" value="MATE_MdtK"/>
</dbReference>
<dbReference type="InterPro" id="IPR048279">
    <property type="entry name" value="MdtK-like"/>
</dbReference>
<dbReference type="NCBIfam" id="TIGR00797">
    <property type="entry name" value="matE"/>
    <property type="match status" value="1"/>
</dbReference>
<dbReference type="PANTHER" id="PTHR43298:SF2">
    <property type="entry name" value="FMN_FAD EXPORTER YEEO-RELATED"/>
    <property type="match status" value="1"/>
</dbReference>
<dbReference type="PANTHER" id="PTHR43298">
    <property type="entry name" value="MULTIDRUG RESISTANCE PROTEIN NORM-RELATED"/>
    <property type="match status" value="1"/>
</dbReference>
<dbReference type="Pfam" id="PF01554">
    <property type="entry name" value="MatE"/>
    <property type="match status" value="2"/>
</dbReference>
<dbReference type="PIRSF" id="PIRSF006603">
    <property type="entry name" value="DinF"/>
    <property type="match status" value="1"/>
</dbReference>
<protein>
    <recommendedName>
        <fullName>Probable multidrug resistance protein NorM</fullName>
    </recommendedName>
    <alternativeName>
        <fullName>Multidrug-efflux transporter</fullName>
    </alternativeName>
</protein>
<proteinExistence type="inferred from homology"/>
<reference key="1">
    <citation type="journal article" date="2004" name="Nucleic Acids Res.">
        <title>Whole genome comparisons of serotype 4b and 1/2a strains of the food-borne pathogen Listeria monocytogenes reveal new insights into the core genome components of this species.</title>
        <authorList>
            <person name="Nelson K.E."/>
            <person name="Fouts D.E."/>
            <person name="Mongodin E.F."/>
            <person name="Ravel J."/>
            <person name="DeBoy R.T."/>
            <person name="Kolonay J.F."/>
            <person name="Rasko D.A."/>
            <person name="Angiuoli S.V."/>
            <person name="Gill S.R."/>
            <person name="Paulsen I.T."/>
            <person name="Peterson J.D."/>
            <person name="White O."/>
            <person name="Nelson W.C."/>
            <person name="Nierman W.C."/>
            <person name="Beanan M.J."/>
            <person name="Brinkac L.M."/>
            <person name="Daugherty S.C."/>
            <person name="Dodson R.J."/>
            <person name="Durkin A.S."/>
            <person name="Madupu R."/>
            <person name="Haft D.H."/>
            <person name="Selengut J."/>
            <person name="Van Aken S.E."/>
            <person name="Khouri H.M."/>
            <person name="Fedorova N."/>
            <person name="Forberger H.A."/>
            <person name="Tran B."/>
            <person name="Kathariou S."/>
            <person name="Wonderling L.D."/>
            <person name="Uhlich G.A."/>
            <person name="Bayles D.O."/>
            <person name="Luchansky J.B."/>
            <person name="Fraser C.M."/>
        </authorList>
    </citation>
    <scope>NUCLEOTIDE SEQUENCE [LARGE SCALE GENOMIC DNA]</scope>
    <source>
        <strain>F2365</strain>
    </source>
</reference>
<accession>Q71YH0</accession>
<feature type="chain" id="PRO_0000164222" description="Probable multidrug resistance protein NorM">
    <location>
        <begin position="1"/>
        <end position="456"/>
    </location>
</feature>
<feature type="transmembrane region" description="Helical" evidence="2">
    <location>
        <begin position="13"/>
        <end position="34"/>
    </location>
</feature>
<feature type="transmembrane region" description="Helical" evidence="2">
    <location>
        <begin position="54"/>
        <end position="76"/>
    </location>
</feature>
<feature type="transmembrane region" description="Helical" evidence="2">
    <location>
        <begin position="95"/>
        <end position="117"/>
    </location>
</feature>
<feature type="transmembrane region" description="Helical" evidence="2">
    <location>
        <begin position="132"/>
        <end position="154"/>
    </location>
</feature>
<feature type="transmembrane region" description="Helical" evidence="2">
    <location>
        <begin position="161"/>
        <end position="183"/>
    </location>
</feature>
<feature type="transmembrane region" description="Helical" evidence="2">
    <location>
        <begin position="193"/>
        <end position="215"/>
    </location>
</feature>
<feature type="transmembrane region" description="Helical" evidence="2">
    <location>
        <begin position="244"/>
        <end position="266"/>
    </location>
</feature>
<feature type="transmembrane region" description="Helical" evidence="2">
    <location>
        <begin position="286"/>
        <end position="308"/>
    </location>
</feature>
<feature type="transmembrane region" description="Helical" evidence="2">
    <location>
        <begin position="321"/>
        <end position="343"/>
    </location>
</feature>
<feature type="transmembrane region" description="Helical" evidence="2">
    <location>
        <begin position="358"/>
        <end position="380"/>
    </location>
</feature>
<feature type="transmembrane region" description="Helical" evidence="2">
    <location>
        <begin position="387"/>
        <end position="409"/>
    </location>
</feature>
<feature type="transmembrane region" description="Helical" evidence="2">
    <location>
        <begin position="414"/>
        <end position="436"/>
    </location>
</feature>